<feature type="chain" id="PRO_1000046812" description="Small ribosomal subunit protein eS31">
    <location>
        <begin position="1"/>
        <end position="49"/>
    </location>
</feature>
<feature type="zinc finger region" description="C4-type" evidence="1">
    <location>
        <begin position="21"/>
        <end position="42"/>
    </location>
</feature>
<feature type="binding site" evidence="1">
    <location>
        <position position="21"/>
    </location>
    <ligand>
        <name>Zn(2+)</name>
        <dbReference type="ChEBI" id="CHEBI:29105"/>
    </ligand>
</feature>
<feature type="binding site" evidence="1">
    <location>
        <position position="24"/>
    </location>
    <ligand>
        <name>Zn(2+)</name>
        <dbReference type="ChEBI" id="CHEBI:29105"/>
    </ligand>
</feature>
<feature type="binding site" evidence="1">
    <location>
        <position position="39"/>
    </location>
    <ligand>
        <name>Zn(2+)</name>
        <dbReference type="ChEBI" id="CHEBI:29105"/>
    </ligand>
</feature>
<feature type="binding site" evidence="1">
    <location>
        <position position="42"/>
    </location>
    <ligand>
        <name>Zn(2+)</name>
        <dbReference type="ChEBI" id="CHEBI:29105"/>
    </ligand>
</feature>
<evidence type="ECO:0000255" key="1">
    <source>
        <dbReference type="HAMAP-Rule" id="MF_00777"/>
    </source>
</evidence>
<evidence type="ECO:0000305" key="2"/>
<sequence length="49" mass="5591">MAVKDYYKVQGDSVTRIKQFCPRCGPGTFLADHKNRLTCGKCGYTEFKK</sequence>
<organism>
    <name type="scientific">Methanosarcina barkeri (strain Fusaro / DSM 804)</name>
    <dbReference type="NCBI Taxonomy" id="269797"/>
    <lineage>
        <taxon>Archaea</taxon>
        <taxon>Methanobacteriati</taxon>
        <taxon>Methanobacteriota</taxon>
        <taxon>Stenosarchaea group</taxon>
        <taxon>Methanomicrobia</taxon>
        <taxon>Methanosarcinales</taxon>
        <taxon>Methanosarcinaceae</taxon>
        <taxon>Methanosarcina</taxon>
    </lineage>
</organism>
<gene>
    <name evidence="1" type="primary">rps27ae</name>
    <name type="ordered locus">Mbar_A0281</name>
</gene>
<proteinExistence type="inferred from homology"/>
<name>RS27A_METBF</name>
<dbReference type="EMBL" id="CP000099">
    <property type="protein sequence ID" value="AAZ69265.1"/>
    <property type="molecule type" value="Genomic_DNA"/>
</dbReference>
<dbReference type="SMR" id="Q46FS7"/>
<dbReference type="STRING" id="269797.Mbar_A0281"/>
<dbReference type="PaxDb" id="269797-Mbar_A0281"/>
<dbReference type="KEGG" id="mba:Mbar_A0281"/>
<dbReference type="eggNOG" id="arCOG04183">
    <property type="taxonomic scope" value="Archaea"/>
</dbReference>
<dbReference type="HOGENOM" id="CLU_179743_2_0_2"/>
<dbReference type="OrthoDB" id="25142at2157"/>
<dbReference type="GO" id="GO:1990904">
    <property type="term" value="C:ribonucleoprotein complex"/>
    <property type="evidence" value="ECO:0007669"/>
    <property type="project" value="UniProtKB-KW"/>
</dbReference>
<dbReference type="GO" id="GO:0005840">
    <property type="term" value="C:ribosome"/>
    <property type="evidence" value="ECO:0007669"/>
    <property type="project" value="UniProtKB-KW"/>
</dbReference>
<dbReference type="GO" id="GO:0003735">
    <property type="term" value="F:structural constituent of ribosome"/>
    <property type="evidence" value="ECO:0007669"/>
    <property type="project" value="InterPro"/>
</dbReference>
<dbReference type="GO" id="GO:0008270">
    <property type="term" value="F:zinc ion binding"/>
    <property type="evidence" value="ECO:0007669"/>
    <property type="project" value="UniProtKB-UniRule"/>
</dbReference>
<dbReference type="GO" id="GO:0006412">
    <property type="term" value="P:translation"/>
    <property type="evidence" value="ECO:0007669"/>
    <property type="project" value="UniProtKB-UniRule"/>
</dbReference>
<dbReference type="Gene3D" id="6.20.50.180">
    <property type="match status" value="1"/>
</dbReference>
<dbReference type="HAMAP" id="MF_00777">
    <property type="entry name" value="Ribosomal_eS31"/>
    <property type="match status" value="1"/>
</dbReference>
<dbReference type="InterPro" id="IPR002906">
    <property type="entry name" value="Ribosomal_eS31"/>
</dbReference>
<dbReference type="InterPro" id="IPR022845">
    <property type="entry name" value="Ribosomal_eS31_arc"/>
</dbReference>
<dbReference type="InterPro" id="IPR011332">
    <property type="entry name" value="Ribosomal_zn-bd"/>
</dbReference>
<dbReference type="NCBIfam" id="NF001669">
    <property type="entry name" value="PRK00432.1"/>
    <property type="match status" value="1"/>
</dbReference>
<dbReference type="Pfam" id="PF01599">
    <property type="entry name" value="Ribosomal_S27"/>
    <property type="match status" value="1"/>
</dbReference>
<dbReference type="SMART" id="SM01402">
    <property type="entry name" value="Ribosomal_S27"/>
    <property type="match status" value="1"/>
</dbReference>
<dbReference type="SUPFAM" id="SSF57829">
    <property type="entry name" value="Zn-binding ribosomal proteins"/>
    <property type="match status" value="1"/>
</dbReference>
<keyword id="KW-0479">Metal-binding</keyword>
<keyword id="KW-0687">Ribonucleoprotein</keyword>
<keyword id="KW-0689">Ribosomal protein</keyword>
<keyword id="KW-0862">Zinc</keyword>
<keyword id="KW-0863">Zinc-finger</keyword>
<accession>Q46FS7</accession>
<reference key="1">
    <citation type="journal article" date="2006" name="J. Bacteriol.">
        <title>The Methanosarcina barkeri genome: comparative analysis with Methanosarcina acetivorans and Methanosarcina mazei reveals extensive rearrangement within methanosarcinal genomes.</title>
        <authorList>
            <person name="Maeder D.L."/>
            <person name="Anderson I."/>
            <person name="Brettin T.S."/>
            <person name="Bruce D.C."/>
            <person name="Gilna P."/>
            <person name="Han C.S."/>
            <person name="Lapidus A."/>
            <person name="Metcalf W.W."/>
            <person name="Saunders E."/>
            <person name="Tapia R."/>
            <person name="Sowers K.R."/>
        </authorList>
    </citation>
    <scope>NUCLEOTIDE SEQUENCE [LARGE SCALE GENOMIC DNA]</scope>
    <source>
        <strain>Fusaro / DSM 804</strain>
    </source>
</reference>
<comment type="cofactor">
    <cofactor evidence="1">
        <name>Zn(2+)</name>
        <dbReference type="ChEBI" id="CHEBI:29105"/>
    </cofactor>
    <text evidence="1">Binds 1 zinc ion per subunit.</text>
</comment>
<comment type="subunit">
    <text evidence="1">Part of the 30S ribosomal subunit.</text>
</comment>
<comment type="similarity">
    <text evidence="1">Belongs to the eukaryotic ribosomal protein eS31 family.</text>
</comment>
<protein>
    <recommendedName>
        <fullName evidence="1">Small ribosomal subunit protein eS31</fullName>
    </recommendedName>
    <alternativeName>
        <fullName evidence="2">30S ribosomal protein S27ae</fullName>
    </alternativeName>
</protein>